<gene>
    <name evidence="1" type="primary">hisI</name>
    <name type="ordered locus">Tgr7_0217</name>
</gene>
<feature type="chain" id="PRO_1000149079" description="Phosphoribosyl-AMP cyclohydrolase">
    <location>
        <begin position="1"/>
        <end position="131"/>
    </location>
</feature>
<feature type="binding site" evidence="1">
    <location>
        <position position="78"/>
    </location>
    <ligand>
        <name>Mg(2+)</name>
        <dbReference type="ChEBI" id="CHEBI:18420"/>
    </ligand>
</feature>
<feature type="binding site" evidence="1">
    <location>
        <position position="79"/>
    </location>
    <ligand>
        <name>Zn(2+)</name>
        <dbReference type="ChEBI" id="CHEBI:29105"/>
        <note>ligand shared between dimeric partners</note>
    </ligand>
</feature>
<feature type="binding site" evidence="1">
    <location>
        <position position="80"/>
    </location>
    <ligand>
        <name>Mg(2+)</name>
        <dbReference type="ChEBI" id="CHEBI:18420"/>
    </ligand>
</feature>
<feature type="binding site" evidence="1">
    <location>
        <position position="82"/>
    </location>
    <ligand>
        <name>Mg(2+)</name>
        <dbReference type="ChEBI" id="CHEBI:18420"/>
    </ligand>
</feature>
<feature type="binding site" evidence="1">
    <location>
        <position position="96"/>
    </location>
    <ligand>
        <name>Zn(2+)</name>
        <dbReference type="ChEBI" id="CHEBI:29105"/>
        <note>ligand shared between dimeric partners</note>
    </ligand>
</feature>
<feature type="binding site" evidence="1">
    <location>
        <position position="103"/>
    </location>
    <ligand>
        <name>Zn(2+)</name>
        <dbReference type="ChEBI" id="CHEBI:29105"/>
        <note>ligand shared between dimeric partners</note>
    </ligand>
</feature>
<organism>
    <name type="scientific">Thioalkalivibrio sulfidiphilus (strain HL-EbGR7)</name>
    <dbReference type="NCBI Taxonomy" id="396588"/>
    <lineage>
        <taxon>Bacteria</taxon>
        <taxon>Pseudomonadati</taxon>
        <taxon>Pseudomonadota</taxon>
        <taxon>Gammaproteobacteria</taxon>
        <taxon>Chromatiales</taxon>
        <taxon>Ectothiorhodospiraceae</taxon>
        <taxon>Thioalkalivibrio</taxon>
    </lineage>
</organism>
<sequence>MSPDWLDTIHWNPDGLIPAIAQETGTGKVLMLAWMNRESLQRTLETGEAVYWSRSRQRLWHKGESSGNTQRVVQMRLDCDRDTLLLEVEQRGGIACHTGRHNCFYHRYQDGDWQVVEPVLKDPDQMYGDKT</sequence>
<reference key="1">
    <citation type="journal article" date="2011" name="Stand. Genomic Sci.">
        <title>Complete genome sequence of 'Thioalkalivibrio sulfidophilus' HL-EbGr7.</title>
        <authorList>
            <person name="Muyzer G."/>
            <person name="Sorokin D.Y."/>
            <person name="Mavromatis K."/>
            <person name="Lapidus A."/>
            <person name="Clum A."/>
            <person name="Ivanova N."/>
            <person name="Pati A."/>
            <person name="d'Haeseleer P."/>
            <person name="Woyke T."/>
            <person name="Kyrpides N.C."/>
        </authorList>
    </citation>
    <scope>NUCLEOTIDE SEQUENCE [LARGE SCALE GENOMIC DNA]</scope>
    <source>
        <strain>HL-EbGR7</strain>
    </source>
</reference>
<dbReference type="EC" id="3.5.4.19" evidence="1"/>
<dbReference type="EMBL" id="CP001339">
    <property type="protein sequence ID" value="ACL71316.1"/>
    <property type="molecule type" value="Genomic_DNA"/>
</dbReference>
<dbReference type="RefSeq" id="WP_012636805.1">
    <property type="nucleotide sequence ID" value="NC_011901.1"/>
</dbReference>
<dbReference type="SMR" id="B8GU33"/>
<dbReference type="STRING" id="396588.Tgr7_0217"/>
<dbReference type="KEGG" id="tgr:Tgr7_0217"/>
<dbReference type="eggNOG" id="COG0139">
    <property type="taxonomic scope" value="Bacteria"/>
</dbReference>
<dbReference type="HOGENOM" id="CLU_048577_5_0_6"/>
<dbReference type="OrthoDB" id="9795769at2"/>
<dbReference type="UniPathway" id="UPA00031">
    <property type="reaction ID" value="UER00008"/>
</dbReference>
<dbReference type="Proteomes" id="UP000002383">
    <property type="component" value="Chromosome"/>
</dbReference>
<dbReference type="GO" id="GO:0005737">
    <property type="term" value="C:cytoplasm"/>
    <property type="evidence" value="ECO:0007669"/>
    <property type="project" value="UniProtKB-SubCell"/>
</dbReference>
<dbReference type="GO" id="GO:0000287">
    <property type="term" value="F:magnesium ion binding"/>
    <property type="evidence" value="ECO:0007669"/>
    <property type="project" value="UniProtKB-UniRule"/>
</dbReference>
<dbReference type="GO" id="GO:0004635">
    <property type="term" value="F:phosphoribosyl-AMP cyclohydrolase activity"/>
    <property type="evidence" value="ECO:0007669"/>
    <property type="project" value="UniProtKB-UniRule"/>
</dbReference>
<dbReference type="GO" id="GO:0008270">
    <property type="term" value="F:zinc ion binding"/>
    <property type="evidence" value="ECO:0007669"/>
    <property type="project" value="UniProtKB-UniRule"/>
</dbReference>
<dbReference type="GO" id="GO:0000105">
    <property type="term" value="P:L-histidine biosynthetic process"/>
    <property type="evidence" value="ECO:0007669"/>
    <property type="project" value="UniProtKB-UniRule"/>
</dbReference>
<dbReference type="FunFam" id="3.10.20.810:FF:000001">
    <property type="entry name" value="Histidine biosynthesis bifunctional protein HisIE"/>
    <property type="match status" value="1"/>
</dbReference>
<dbReference type="Gene3D" id="3.10.20.810">
    <property type="entry name" value="Phosphoribosyl-AMP cyclohydrolase"/>
    <property type="match status" value="1"/>
</dbReference>
<dbReference type="HAMAP" id="MF_01021">
    <property type="entry name" value="HisI"/>
    <property type="match status" value="1"/>
</dbReference>
<dbReference type="InterPro" id="IPR026660">
    <property type="entry name" value="PRA-CH"/>
</dbReference>
<dbReference type="InterPro" id="IPR002496">
    <property type="entry name" value="PRib_AMP_CycHydrolase_dom"/>
</dbReference>
<dbReference type="InterPro" id="IPR038019">
    <property type="entry name" value="PRib_AMP_CycHydrolase_sf"/>
</dbReference>
<dbReference type="NCBIfam" id="NF000768">
    <property type="entry name" value="PRK00051.1"/>
    <property type="match status" value="1"/>
</dbReference>
<dbReference type="PANTHER" id="PTHR42945">
    <property type="entry name" value="HISTIDINE BIOSYNTHESIS BIFUNCTIONAL PROTEIN"/>
    <property type="match status" value="1"/>
</dbReference>
<dbReference type="PANTHER" id="PTHR42945:SF1">
    <property type="entry name" value="HISTIDINE BIOSYNTHESIS BIFUNCTIONAL PROTEIN HIS7"/>
    <property type="match status" value="1"/>
</dbReference>
<dbReference type="Pfam" id="PF01502">
    <property type="entry name" value="PRA-CH"/>
    <property type="match status" value="1"/>
</dbReference>
<dbReference type="SUPFAM" id="SSF141734">
    <property type="entry name" value="HisI-like"/>
    <property type="match status" value="1"/>
</dbReference>
<proteinExistence type="inferred from homology"/>
<name>HIS3_THISH</name>
<protein>
    <recommendedName>
        <fullName evidence="1">Phosphoribosyl-AMP cyclohydrolase</fullName>
        <shortName evidence="1">PRA-CH</shortName>
        <ecNumber evidence="1">3.5.4.19</ecNumber>
    </recommendedName>
</protein>
<evidence type="ECO:0000255" key="1">
    <source>
        <dbReference type="HAMAP-Rule" id="MF_01021"/>
    </source>
</evidence>
<accession>B8GU33</accession>
<keyword id="KW-0028">Amino-acid biosynthesis</keyword>
<keyword id="KW-0963">Cytoplasm</keyword>
<keyword id="KW-0368">Histidine biosynthesis</keyword>
<keyword id="KW-0378">Hydrolase</keyword>
<keyword id="KW-0460">Magnesium</keyword>
<keyword id="KW-0479">Metal-binding</keyword>
<keyword id="KW-1185">Reference proteome</keyword>
<keyword id="KW-0862">Zinc</keyword>
<comment type="function">
    <text evidence="1">Catalyzes the hydrolysis of the adenine ring of phosphoribosyl-AMP.</text>
</comment>
<comment type="catalytic activity">
    <reaction evidence="1">
        <text>1-(5-phospho-beta-D-ribosyl)-5'-AMP + H2O = 1-(5-phospho-beta-D-ribosyl)-5-[(5-phospho-beta-D-ribosylamino)methylideneamino]imidazole-4-carboxamide</text>
        <dbReference type="Rhea" id="RHEA:20049"/>
        <dbReference type="ChEBI" id="CHEBI:15377"/>
        <dbReference type="ChEBI" id="CHEBI:58435"/>
        <dbReference type="ChEBI" id="CHEBI:59457"/>
        <dbReference type="EC" id="3.5.4.19"/>
    </reaction>
</comment>
<comment type="cofactor">
    <cofactor evidence="1">
        <name>Mg(2+)</name>
        <dbReference type="ChEBI" id="CHEBI:18420"/>
    </cofactor>
    <text evidence="1">Binds 1 Mg(2+) ion per subunit.</text>
</comment>
<comment type="cofactor">
    <cofactor evidence="1">
        <name>Zn(2+)</name>
        <dbReference type="ChEBI" id="CHEBI:29105"/>
    </cofactor>
    <text evidence="1">Binds 1 zinc ion per subunit.</text>
</comment>
<comment type="pathway">
    <text evidence="1">Amino-acid biosynthesis; L-histidine biosynthesis; L-histidine from 5-phospho-alpha-D-ribose 1-diphosphate: step 3/9.</text>
</comment>
<comment type="subunit">
    <text evidence="1">Homodimer.</text>
</comment>
<comment type="subcellular location">
    <subcellularLocation>
        <location evidence="1">Cytoplasm</location>
    </subcellularLocation>
</comment>
<comment type="similarity">
    <text evidence="1">Belongs to the PRA-CH family.</text>
</comment>